<name>PSBE_PANGI</name>
<sequence>MSGNTGERSFADIITSIRYWVIHSITIPSLFIAGWLFVSTGLAYDVFGSPRPNEYFTENRQGIPLITGRFDPLEQLDEFSRSF</sequence>
<gene>
    <name evidence="1" type="primary">psbE</name>
    <name type="ORF">PSC0664</name>
</gene>
<evidence type="ECO:0000255" key="1">
    <source>
        <dbReference type="HAMAP-Rule" id="MF_00642"/>
    </source>
</evidence>
<protein>
    <recommendedName>
        <fullName evidence="1">Cytochrome b559 subunit alpha</fullName>
    </recommendedName>
    <alternativeName>
        <fullName evidence="1">PSII reaction center subunit V</fullName>
    </alternativeName>
</protein>
<proteinExistence type="inferred from homology"/>
<organism>
    <name type="scientific">Panax ginseng</name>
    <name type="common">Korean ginseng</name>
    <dbReference type="NCBI Taxonomy" id="4054"/>
    <lineage>
        <taxon>Eukaryota</taxon>
        <taxon>Viridiplantae</taxon>
        <taxon>Streptophyta</taxon>
        <taxon>Embryophyta</taxon>
        <taxon>Tracheophyta</taxon>
        <taxon>Spermatophyta</taxon>
        <taxon>Magnoliopsida</taxon>
        <taxon>eudicotyledons</taxon>
        <taxon>Gunneridae</taxon>
        <taxon>Pentapetalae</taxon>
        <taxon>asterids</taxon>
        <taxon>campanulids</taxon>
        <taxon>Apiales</taxon>
        <taxon>Araliaceae</taxon>
        <taxon>Panax</taxon>
    </lineage>
</organism>
<accession>Q68RY9</accession>
<reference key="1">
    <citation type="journal article" date="2004" name="DNA Res.">
        <title>Complete chloroplast genome sequence from Korea ginseng (Panax schinseng Nees) and comparative analysis of sequence evolution among 17 vascular plants.</title>
        <authorList>
            <person name="Kim K.-J."/>
            <person name="Lee H.-L."/>
        </authorList>
    </citation>
    <scope>NUCLEOTIDE SEQUENCE [LARGE SCALE GENOMIC DNA]</scope>
</reference>
<dbReference type="EMBL" id="AY582139">
    <property type="protein sequence ID" value="AAT98526.1"/>
    <property type="molecule type" value="Genomic_DNA"/>
</dbReference>
<dbReference type="RefSeq" id="YP_086983.1">
    <property type="nucleotide sequence ID" value="NC_006290.1"/>
</dbReference>
<dbReference type="SMR" id="Q68RY9"/>
<dbReference type="GeneID" id="3021485"/>
<dbReference type="GO" id="GO:0009535">
    <property type="term" value="C:chloroplast thylakoid membrane"/>
    <property type="evidence" value="ECO:0007669"/>
    <property type="project" value="UniProtKB-SubCell"/>
</dbReference>
<dbReference type="GO" id="GO:0009539">
    <property type="term" value="C:photosystem II reaction center"/>
    <property type="evidence" value="ECO:0007669"/>
    <property type="project" value="InterPro"/>
</dbReference>
<dbReference type="GO" id="GO:0009055">
    <property type="term" value="F:electron transfer activity"/>
    <property type="evidence" value="ECO:0007669"/>
    <property type="project" value="UniProtKB-UniRule"/>
</dbReference>
<dbReference type="GO" id="GO:0020037">
    <property type="term" value="F:heme binding"/>
    <property type="evidence" value="ECO:0007669"/>
    <property type="project" value="InterPro"/>
</dbReference>
<dbReference type="GO" id="GO:0005506">
    <property type="term" value="F:iron ion binding"/>
    <property type="evidence" value="ECO:0007669"/>
    <property type="project" value="UniProtKB-UniRule"/>
</dbReference>
<dbReference type="GO" id="GO:0009767">
    <property type="term" value="P:photosynthetic electron transport chain"/>
    <property type="evidence" value="ECO:0007669"/>
    <property type="project" value="InterPro"/>
</dbReference>
<dbReference type="Gene3D" id="1.20.5.860">
    <property type="entry name" value="Photosystem II cytochrome b559, alpha subunit"/>
    <property type="match status" value="1"/>
</dbReference>
<dbReference type="HAMAP" id="MF_00642">
    <property type="entry name" value="PSII_PsbE"/>
    <property type="match status" value="1"/>
</dbReference>
<dbReference type="InterPro" id="IPR006217">
    <property type="entry name" value="PSII_cyt_b559_asu"/>
</dbReference>
<dbReference type="InterPro" id="IPR037025">
    <property type="entry name" value="PSII_cyt_b559_asu_sf"/>
</dbReference>
<dbReference type="InterPro" id="IPR006216">
    <property type="entry name" value="PSII_cyt_b559_CS"/>
</dbReference>
<dbReference type="InterPro" id="IPR013081">
    <property type="entry name" value="PSII_cyt_b559_N"/>
</dbReference>
<dbReference type="InterPro" id="IPR013082">
    <property type="entry name" value="PSII_cytb559_asu_lum"/>
</dbReference>
<dbReference type="NCBIfam" id="TIGR01332">
    <property type="entry name" value="cyt_b559_alpha"/>
    <property type="match status" value="1"/>
</dbReference>
<dbReference type="PANTHER" id="PTHR33391">
    <property type="entry name" value="CYTOCHROME B559 SUBUNIT BETA-RELATED"/>
    <property type="match status" value="1"/>
</dbReference>
<dbReference type="PANTHER" id="PTHR33391:SF9">
    <property type="entry name" value="CYTOCHROME B559 SUBUNIT BETA-RELATED"/>
    <property type="match status" value="1"/>
</dbReference>
<dbReference type="Pfam" id="PF00283">
    <property type="entry name" value="Cytochrom_B559"/>
    <property type="match status" value="1"/>
</dbReference>
<dbReference type="Pfam" id="PF00284">
    <property type="entry name" value="Cytochrom_B559a"/>
    <property type="match status" value="1"/>
</dbReference>
<dbReference type="PIRSF" id="PIRSF000036">
    <property type="entry name" value="PsbE"/>
    <property type="match status" value="1"/>
</dbReference>
<dbReference type="SUPFAM" id="SSF161045">
    <property type="entry name" value="Cytochrome b559 subunits"/>
    <property type="match status" value="1"/>
</dbReference>
<dbReference type="PROSITE" id="PS00537">
    <property type="entry name" value="CYTOCHROME_B559"/>
    <property type="match status" value="1"/>
</dbReference>
<feature type="chain" id="PRO_0000200328" description="Cytochrome b559 subunit alpha">
    <location>
        <begin position="1"/>
        <end position="83"/>
    </location>
</feature>
<feature type="transmembrane region" description="Helical" evidence="1">
    <location>
        <begin position="21"/>
        <end position="35"/>
    </location>
</feature>
<feature type="binding site" description="axial binding residue" evidence="1">
    <location>
        <position position="23"/>
    </location>
    <ligand>
        <name>heme</name>
        <dbReference type="ChEBI" id="CHEBI:30413"/>
        <note>ligand shared with beta subunit</note>
    </ligand>
    <ligandPart>
        <name>Fe</name>
        <dbReference type="ChEBI" id="CHEBI:18248"/>
    </ligandPart>
</feature>
<geneLocation type="chloroplast"/>
<keyword id="KW-0150">Chloroplast</keyword>
<keyword id="KW-0249">Electron transport</keyword>
<keyword id="KW-0349">Heme</keyword>
<keyword id="KW-0408">Iron</keyword>
<keyword id="KW-0472">Membrane</keyword>
<keyword id="KW-0479">Metal-binding</keyword>
<keyword id="KW-0602">Photosynthesis</keyword>
<keyword id="KW-0604">Photosystem II</keyword>
<keyword id="KW-0934">Plastid</keyword>
<keyword id="KW-0793">Thylakoid</keyword>
<keyword id="KW-0812">Transmembrane</keyword>
<keyword id="KW-1133">Transmembrane helix</keyword>
<keyword id="KW-0813">Transport</keyword>
<comment type="function">
    <text evidence="1">This b-type cytochrome is tightly associated with the reaction center of photosystem II (PSII). PSII is a light-driven water:plastoquinone oxidoreductase that uses light energy to abstract electrons from H(2)O, generating O(2) and a proton gradient subsequently used for ATP formation. It consists of a core antenna complex that captures photons, and an electron transfer chain that converts photonic excitation into a charge separation.</text>
</comment>
<comment type="cofactor">
    <cofactor evidence="1">
        <name>heme b</name>
        <dbReference type="ChEBI" id="CHEBI:60344"/>
    </cofactor>
    <text evidence="1">With its partner (PsbF) binds heme. PSII binds additional chlorophylls, carotenoids and specific lipids.</text>
</comment>
<comment type="subunit">
    <text evidence="1">Heterodimer of an alpha subunit and a beta subunit. PSII is composed of 1 copy each of membrane proteins PsbA, PsbB, PsbC, PsbD, PsbE, PsbF, PsbH, PsbI, PsbJ, PsbK, PsbL, PsbM, PsbT, PsbX, PsbY, PsbZ, Psb30/Ycf12, at least 3 peripheral proteins of the oxygen-evolving complex and a large number of cofactors. It forms dimeric complexes.</text>
</comment>
<comment type="subcellular location">
    <subcellularLocation>
        <location evidence="1">Plastid</location>
        <location evidence="1">Chloroplast thylakoid membrane</location>
        <topology evidence="1">Single-pass membrane protein</topology>
    </subcellularLocation>
</comment>
<comment type="similarity">
    <text evidence="1">Belongs to the PsbE/PsbF family.</text>
</comment>